<keyword id="KW-0238">DNA-binding</keyword>
<keyword id="KW-0479">Metal-binding</keyword>
<keyword id="KW-0539">Nucleus</keyword>
<keyword id="KW-1185">Reference proteome</keyword>
<keyword id="KW-0677">Repeat</keyword>
<keyword id="KW-0862">Zinc</keyword>
<keyword id="KW-0863">Zinc-finger</keyword>
<accession>P16374</accession>
<accession>Q61135</accession>
<sequence>MANSSSQHMVCGSVTFRDVAVDFSQEEWACLDATQKVLYRNIMLETYSNLVAVVGRCIPKPDLIVLLEPEKEPWMAVKKETGRPSQGLETGFEAENRSPKNHVYNKKLPKQTIQQLSKTSDVQGVSVSNGPGYSVIKEPQNYQEGDANRNITNKKEMSTYTSKTLAHNKEKPYKCKDCGKCFGCKSNLHQHESIHTGEKPYECKDCGKTFRLPQMLSRHQKSHSDERPFECNICGKSFHLPTLLQYHKNIHTGLKPFECEECGKSFKSFNRISTLFQHRTIHAGMKPYKCNVCGKAFNRRSNLLQHQKIHSEDRPFHCKVCGKAFTVLAQLTRHENIHTEDKSFECKQCGKIFSNGSYLLRHYDTHTNEKPFECNICGKAFRLHLYLSEHQKTHTDEKPFKCKLCESAFRRKYQLSEHQRIHTDGKPYQCKDCWEFFRRRSNFIEHQSIHTGKKPFECKDCGKVFRLNIHLIRHQRFHSDEKPFECKECGKAFHFSSQLNNHKTSHTGQTPFECKECGKSFKRVSSLVEHRIIHSGVKPYKCNACGRAFNRRSNLMQHEKIHSDERPFECKDCGKAFTVLAQLTRHQTIHNGKKSYECEQCGSAFRLPYQLTQHQRIHYDVKPFQCKECGRAFVRSTGLRIHERIHTGEKPFQCKECGEAFQYHYQFLGHFRIHTGKNPYECSECGKYFTYGRDLKVHQSIHNLEKP</sequence>
<proteinExistence type="evidence at transcript level"/>
<feature type="chain" id="PRO_0000047304" description="Zinc finger protein 60">
    <location>
        <begin position="1"/>
        <end position="707"/>
    </location>
</feature>
<feature type="domain" description="KRAB" evidence="2">
    <location>
        <begin position="14"/>
        <end position="86"/>
    </location>
</feature>
<feature type="zinc finger region" description="C2H2-type 1" evidence="1">
    <location>
        <begin position="173"/>
        <end position="195"/>
    </location>
</feature>
<feature type="zinc finger region" description="C2H2-type 2" evidence="1">
    <location>
        <begin position="201"/>
        <end position="223"/>
    </location>
</feature>
<feature type="zinc finger region" description="C2H2-type 3" evidence="1">
    <location>
        <begin position="229"/>
        <end position="251"/>
    </location>
</feature>
<feature type="zinc finger region" description="C2H2-type 4" evidence="1">
    <location>
        <begin position="257"/>
        <end position="282"/>
    </location>
</feature>
<feature type="zinc finger region" description="C2H2-type 5" evidence="1">
    <location>
        <begin position="288"/>
        <end position="310"/>
    </location>
</feature>
<feature type="zinc finger region" description="C2H2-type 6" evidence="1">
    <location>
        <begin position="316"/>
        <end position="338"/>
    </location>
</feature>
<feature type="zinc finger region" description="C2H2-type 7" evidence="1">
    <location>
        <begin position="344"/>
        <end position="366"/>
    </location>
</feature>
<feature type="zinc finger region" description="C2H2-type 8" evidence="1">
    <location>
        <begin position="372"/>
        <end position="394"/>
    </location>
</feature>
<feature type="zinc finger region" description="C2H2-type 9" evidence="1">
    <location>
        <begin position="400"/>
        <end position="422"/>
    </location>
</feature>
<feature type="zinc finger region" description="C2H2-type 10" evidence="1">
    <location>
        <begin position="428"/>
        <end position="450"/>
    </location>
</feature>
<feature type="zinc finger region" description="C2H2-type 11" evidence="1">
    <location>
        <begin position="456"/>
        <end position="478"/>
    </location>
</feature>
<feature type="zinc finger region" description="C2H2-type 12" evidence="1">
    <location>
        <begin position="484"/>
        <end position="506"/>
    </location>
</feature>
<feature type="zinc finger region" description="C2H2-type 13" evidence="1">
    <location>
        <begin position="512"/>
        <end position="534"/>
    </location>
</feature>
<feature type="zinc finger region" description="C2H2-type 14" evidence="1">
    <location>
        <begin position="540"/>
        <end position="562"/>
    </location>
</feature>
<feature type="zinc finger region" description="C2H2-type 15" evidence="1">
    <location>
        <begin position="568"/>
        <end position="590"/>
    </location>
</feature>
<feature type="zinc finger region" description="C2H2-type 16" evidence="1">
    <location>
        <begin position="596"/>
        <end position="618"/>
    </location>
</feature>
<feature type="zinc finger region" description="C2H2-type 17" evidence="1">
    <location>
        <begin position="624"/>
        <end position="646"/>
    </location>
</feature>
<feature type="zinc finger region" description="C2H2-type 18" evidence="1">
    <location>
        <begin position="652"/>
        <end position="674"/>
    </location>
</feature>
<feature type="zinc finger region" description="C2H2-type 19" evidence="1">
    <location>
        <begin position="680"/>
        <end position="702"/>
    </location>
</feature>
<organism>
    <name type="scientific">Mus musculus</name>
    <name type="common">Mouse</name>
    <dbReference type="NCBI Taxonomy" id="10090"/>
    <lineage>
        <taxon>Eukaryota</taxon>
        <taxon>Metazoa</taxon>
        <taxon>Chordata</taxon>
        <taxon>Craniata</taxon>
        <taxon>Vertebrata</taxon>
        <taxon>Euteleostomi</taxon>
        <taxon>Mammalia</taxon>
        <taxon>Eutheria</taxon>
        <taxon>Euarchontoglires</taxon>
        <taxon>Glires</taxon>
        <taxon>Rodentia</taxon>
        <taxon>Myomorpha</taxon>
        <taxon>Muroidea</taxon>
        <taxon>Muridae</taxon>
        <taxon>Murinae</taxon>
        <taxon>Mus</taxon>
        <taxon>Mus</taxon>
    </lineage>
</organism>
<dbReference type="EMBL" id="U48721">
    <property type="protein sequence ID" value="AAB06876.1"/>
    <property type="molecule type" value="Genomic_DNA"/>
</dbReference>
<dbReference type="EMBL" id="M28515">
    <property type="protein sequence ID" value="AAA39533.1"/>
    <property type="molecule type" value="mRNA"/>
</dbReference>
<dbReference type="PIR" id="C39240">
    <property type="entry name" value="C39240"/>
</dbReference>
<dbReference type="PIR" id="S68858">
    <property type="entry name" value="S68858"/>
</dbReference>
<dbReference type="SMR" id="P16374"/>
<dbReference type="STRING" id="10090.ENSMUSP00000103973"/>
<dbReference type="iPTMnet" id="P16374"/>
<dbReference type="PhosphoSitePlus" id="P16374"/>
<dbReference type="PaxDb" id="10090-ENSMUSP00000103973"/>
<dbReference type="ProteomicsDB" id="299549"/>
<dbReference type="AGR" id="MGI:99207"/>
<dbReference type="MGI" id="MGI:99207">
    <property type="gene designation" value="Zfp60"/>
</dbReference>
<dbReference type="eggNOG" id="KOG1721">
    <property type="taxonomic scope" value="Eukaryota"/>
</dbReference>
<dbReference type="InParanoid" id="P16374"/>
<dbReference type="OrthoDB" id="9411774at2759"/>
<dbReference type="PhylomeDB" id="P16374"/>
<dbReference type="Reactome" id="R-MMU-212436">
    <property type="pathway name" value="Generic Transcription Pathway"/>
</dbReference>
<dbReference type="PRO" id="PR:P16374"/>
<dbReference type="Proteomes" id="UP000000589">
    <property type="component" value="Unplaced"/>
</dbReference>
<dbReference type="RNAct" id="P16374">
    <property type="molecule type" value="protein"/>
</dbReference>
<dbReference type="GO" id="GO:0005634">
    <property type="term" value="C:nucleus"/>
    <property type="evidence" value="ECO:0007669"/>
    <property type="project" value="UniProtKB-SubCell"/>
</dbReference>
<dbReference type="GO" id="GO:0003677">
    <property type="term" value="F:DNA binding"/>
    <property type="evidence" value="ECO:0007669"/>
    <property type="project" value="UniProtKB-KW"/>
</dbReference>
<dbReference type="GO" id="GO:0008270">
    <property type="term" value="F:zinc ion binding"/>
    <property type="evidence" value="ECO:0007669"/>
    <property type="project" value="UniProtKB-KW"/>
</dbReference>
<dbReference type="GO" id="GO:0006355">
    <property type="term" value="P:regulation of DNA-templated transcription"/>
    <property type="evidence" value="ECO:0007669"/>
    <property type="project" value="InterPro"/>
</dbReference>
<dbReference type="CDD" id="cd07765">
    <property type="entry name" value="KRAB_A-box"/>
    <property type="match status" value="1"/>
</dbReference>
<dbReference type="FunFam" id="3.30.160.60:FF:002308">
    <property type="match status" value="5"/>
</dbReference>
<dbReference type="FunFam" id="3.30.160.60:FF:002715">
    <property type="match status" value="4"/>
</dbReference>
<dbReference type="FunFam" id="3.30.160.60:FF:000008">
    <property type="entry name" value="RB-associated KRAB zinc finger protein-like"/>
    <property type="match status" value="1"/>
</dbReference>
<dbReference type="FunFam" id="3.30.160.60:FF:000638">
    <property type="entry name" value="Zinc finger protein 184"/>
    <property type="match status" value="1"/>
</dbReference>
<dbReference type="FunFam" id="3.30.160.60:FF:000204">
    <property type="entry name" value="Zinc finger protein 331"/>
    <property type="match status" value="1"/>
</dbReference>
<dbReference type="FunFam" id="3.30.160.60:FF:000184">
    <property type="entry name" value="Zinc finger protein 333"/>
    <property type="match status" value="1"/>
</dbReference>
<dbReference type="FunFam" id="3.30.160.60:FF:000443">
    <property type="entry name" value="Zinc finger protein 41"/>
    <property type="match status" value="1"/>
</dbReference>
<dbReference type="FunFam" id="3.30.160.60:FF:001174">
    <property type="entry name" value="zinc finger protein 527 isoform X1"/>
    <property type="match status" value="1"/>
</dbReference>
<dbReference type="FunFam" id="3.30.160.60:FF:000384">
    <property type="entry name" value="Zinc finger protein 550"/>
    <property type="match status" value="1"/>
</dbReference>
<dbReference type="FunFam" id="3.30.160.60:FF:001270">
    <property type="entry name" value="zinc finger protein 583 isoform X1"/>
    <property type="match status" value="1"/>
</dbReference>
<dbReference type="FunFam" id="3.30.160.60:FF:001437">
    <property type="entry name" value="Zinc finger protein 594"/>
    <property type="match status" value="1"/>
</dbReference>
<dbReference type="FunFam" id="3.30.160.60:FF:002487">
    <property type="entry name" value="Zinc finger protein 700"/>
    <property type="match status" value="1"/>
</dbReference>
<dbReference type="Gene3D" id="6.10.140.140">
    <property type="match status" value="1"/>
</dbReference>
<dbReference type="Gene3D" id="3.30.160.60">
    <property type="entry name" value="Classic Zinc Finger"/>
    <property type="match status" value="19"/>
</dbReference>
<dbReference type="InterPro" id="IPR001909">
    <property type="entry name" value="KRAB"/>
</dbReference>
<dbReference type="InterPro" id="IPR036051">
    <property type="entry name" value="KRAB_dom_sf"/>
</dbReference>
<dbReference type="InterPro" id="IPR036236">
    <property type="entry name" value="Znf_C2H2_sf"/>
</dbReference>
<dbReference type="InterPro" id="IPR013087">
    <property type="entry name" value="Znf_C2H2_type"/>
</dbReference>
<dbReference type="PANTHER" id="PTHR24381">
    <property type="entry name" value="ZINC FINGER PROTEIN"/>
    <property type="match status" value="1"/>
</dbReference>
<dbReference type="PANTHER" id="PTHR24381:SF390">
    <property type="entry name" value="ZINC FINGER PROTEIN 37 HOMOLOG"/>
    <property type="match status" value="1"/>
</dbReference>
<dbReference type="Pfam" id="PF01352">
    <property type="entry name" value="KRAB"/>
    <property type="match status" value="1"/>
</dbReference>
<dbReference type="Pfam" id="PF00096">
    <property type="entry name" value="zf-C2H2"/>
    <property type="match status" value="16"/>
</dbReference>
<dbReference type="SMART" id="SM00349">
    <property type="entry name" value="KRAB"/>
    <property type="match status" value="1"/>
</dbReference>
<dbReference type="SMART" id="SM00355">
    <property type="entry name" value="ZnF_C2H2"/>
    <property type="match status" value="19"/>
</dbReference>
<dbReference type="SUPFAM" id="SSF57667">
    <property type="entry name" value="beta-beta-alpha zinc fingers"/>
    <property type="match status" value="10"/>
</dbReference>
<dbReference type="SUPFAM" id="SSF109640">
    <property type="entry name" value="KRAB domain (Kruppel-associated box)"/>
    <property type="match status" value="1"/>
</dbReference>
<dbReference type="PROSITE" id="PS50805">
    <property type="entry name" value="KRAB"/>
    <property type="match status" value="1"/>
</dbReference>
<dbReference type="PROSITE" id="PS00028">
    <property type="entry name" value="ZINC_FINGER_C2H2_1"/>
    <property type="match status" value="18"/>
</dbReference>
<dbReference type="PROSITE" id="PS50157">
    <property type="entry name" value="ZINC_FINGER_C2H2_2"/>
    <property type="match status" value="19"/>
</dbReference>
<gene>
    <name type="primary">Zfp60</name>
    <name type="synonym">Mfg3</name>
</gene>
<protein>
    <recommendedName>
        <fullName>Zinc finger protein 60</fullName>
        <shortName>Zfp-60</shortName>
    </recommendedName>
    <alternativeName>
        <fullName>Zinc finger protein Mfg-3</fullName>
    </alternativeName>
</protein>
<evidence type="ECO:0000255" key="1">
    <source>
        <dbReference type="PROSITE-ProRule" id="PRU00042"/>
    </source>
</evidence>
<evidence type="ECO:0000255" key="2">
    <source>
        <dbReference type="PROSITE-ProRule" id="PRU00119"/>
    </source>
</evidence>
<evidence type="ECO:0000305" key="3"/>
<name>ZFP60_MOUSE</name>
<comment type="function">
    <text>May have a role during differentiation processes.</text>
</comment>
<comment type="subcellular location">
    <subcellularLocation>
        <location evidence="3">Nucleus</location>
    </subcellularLocation>
</comment>
<comment type="tissue specificity">
    <text>Expressed widely and evenly in most adult mouse tissues.</text>
</comment>
<comment type="developmental stage">
    <text>Expression is positively regulated upon differentiation and is not related to the cell cycle.</text>
</comment>
<comment type="similarity">
    <text evidence="3">Belongs to the krueppel C2H2-type zinc-finger protein family.</text>
</comment>
<reference key="1">
    <citation type="journal article" date="1996" name="FEBS Lett.">
        <title>Zfp60, a mouse zinc finger gene expressed transiently during in vitro muscle differentiation.</title>
        <authorList>
            <person name="Perez M."/>
            <person name="Rompato G."/>
            <person name="Corbi N."/>
            <person name="de Gregorio L."/>
            <person name="Dragani T.A."/>
            <person name="Passananti C."/>
        </authorList>
    </citation>
    <scope>NUCLEOTIDE SEQUENCE [GENOMIC DNA]</scope>
</reference>
<reference key="2">
    <citation type="journal article" date="1989" name="Proc. Natl. Acad. Sci. U.S.A.">
        <title>Mouse genes coding for 'zinc-finger'-containing proteins: characterization and expression in differentiated cells.</title>
        <authorList>
            <person name="Passananti C."/>
            <person name="Felsani A."/>
            <person name="Caruso M."/>
            <person name="Amati P."/>
        </authorList>
    </citation>
    <scope>NUCLEOTIDE SEQUENCE [MRNA] OF 325-629</scope>
    <source>
        <strain>CD-1</strain>
        <tissue>Skeletal muscle</tissue>
    </source>
</reference>